<keyword id="KW-0406">Ion transport</keyword>
<keyword id="KW-0520">NAD</keyword>
<keyword id="KW-0915">Sodium</keyword>
<keyword id="KW-0739">Sodium transport</keyword>
<keyword id="KW-1278">Translocase</keyword>
<keyword id="KW-0813">Transport</keyword>
<keyword id="KW-0830">Ubiquinone</keyword>
<feature type="chain" id="PRO_1000060132" description="Na(+)-translocating NADH-quinone reductase subunit A">
    <location>
        <begin position="1"/>
        <end position="447"/>
    </location>
</feature>
<reference key="1">
    <citation type="journal article" date="2007" name="PLoS Genet.">
        <title>The complete genome sequence of Yersinia pseudotuberculosis IP31758, the causative agent of Far East scarlet-like fever.</title>
        <authorList>
            <person name="Eppinger M."/>
            <person name="Rosovitz M.J."/>
            <person name="Fricke W.F."/>
            <person name="Rasko D.A."/>
            <person name="Kokorina G."/>
            <person name="Fayolle C."/>
            <person name="Lindler L.E."/>
            <person name="Carniel E."/>
            <person name="Ravel J."/>
        </authorList>
    </citation>
    <scope>NUCLEOTIDE SEQUENCE [LARGE SCALE GENOMIC DNA]</scope>
    <source>
        <strain>IP 31758</strain>
    </source>
</reference>
<gene>
    <name evidence="1" type="primary">nqrA</name>
    <name type="ordered locus">YpsIP31758_3166</name>
</gene>
<accession>A7FLJ8</accession>
<dbReference type="EC" id="7.2.1.1" evidence="1"/>
<dbReference type="EMBL" id="CP000720">
    <property type="protein sequence ID" value="ABS49848.1"/>
    <property type="molecule type" value="Genomic_DNA"/>
</dbReference>
<dbReference type="RefSeq" id="WP_012105597.1">
    <property type="nucleotide sequence ID" value="NC_009708.1"/>
</dbReference>
<dbReference type="SMR" id="A7FLJ8"/>
<dbReference type="KEGG" id="ypi:YpsIP31758_3166"/>
<dbReference type="HOGENOM" id="CLU_046656_0_0_6"/>
<dbReference type="Proteomes" id="UP000002412">
    <property type="component" value="Chromosome"/>
</dbReference>
<dbReference type="GO" id="GO:0016655">
    <property type="term" value="F:oxidoreductase activity, acting on NAD(P)H, quinone or similar compound as acceptor"/>
    <property type="evidence" value="ECO:0007669"/>
    <property type="project" value="UniProtKB-UniRule"/>
</dbReference>
<dbReference type="GO" id="GO:0006814">
    <property type="term" value="P:sodium ion transport"/>
    <property type="evidence" value="ECO:0007669"/>
    <property type="project" value="UniProtKB-UniRule"/>
</dbReference>
<dbReference type="HAMAP" id="MF_00425">
    <property type="entry name" value="NqrA"/>
    <property type="match status" value="1"/>
</dbReference>
<dbReference type="InterPro" id="IPR008703">
    <property type="entry name" value="NqrA"/>
</dbReference>
<dbReference type="InterPro" id="IPR056148">
    <property type="entry name" value="NQRA_2nd"/>
</dbReference>
<dbReference type="InterPro" id="IPR022615">
    <property type="entry name" value="NqrA_C_domain"/>
</dbReference>
<dbReference type="InterPro" id="IPR056147">
    <property type="entry name" value="NQRA_N"/>
</dbReference>
<dbReference type="NCBIfam" id="TIGR01936">
    <property type="entry name" value="nqrA"/>
    <property type="match status" value="1"/>
</dbReference>
<dbReference type="NCBIfam" id="NF003759">
    <property type="entry name" value="PRK05352.1-2"/>
    <property type="match status" value="1"/>
</dbReference>
<dbReference type="NCBIfam" id="NF003761">
    <property type="entry name" value="PRK05352.1-4"/>
    <property type="match status" value="1"/>
</dbReference>
<dbReference type="PANTHER" id="PTHR37839">
    <property type="entry name" value="NA(+)-TRANSLOCATING NADH-QUINONE REDUCTASE SUBUNIT A"/>
    <property type="match status" value="1"/>
</dbReference>
<dbReference type="PANTHER" id="PTHR37839:SF1">
    <property type="entry name" value="NA(+)-TRANSLOCATING NADH-QUINONE REDUCTASE SUBUNIT A"/>
    <property type="match status" value="1"/>
</dbReference>
<dbReference type="Pfam" id="PF24836">
    <property type="entry name" value="NQRA_2nd"/>
    <property type="match status" value="1"/>
</dbReference>
<dbReference type="Pfam" id="PF05896">
    <property type="entry name" value="NQRA_N"/>
    <property type="match status" value="1"/>
</dbReference>
<dbReference type="Pfam" id="PF11973">
    <property type="entry name" value="NQRA_SLBB"/>
    <property type="match status" value="1"/>
</dbReference>
<protein>
    <recommendedName>
        <fullName evidence="1">Na(+)-translocating NADH-quinone reductase subunit A</fullName>
        <shortName evidence="1">Na(+)-NQR subunit A</shortName>
        <shortName evidence="1">Na(+)-translocating NQR subunit A</shortName>
        <ecNumber evidence="1">7.2.1.1</ecNumber>
    </recommendedName>
    <alternativeName>
        <fullName evidence="1">NQR complex subunit A</fullName>
    </alternativeName>
    <alternativeName>
        <fullName evidence="1">NQR-1 subunit A</fullName>
    </alternativeName>
</protein>
<comment type="function">
    <text evidence="1">NQR complex catalyzes the reduction of ubiquinone-1 to ubiquinol by two successive reactions, coupled with the transport of Na(+) ions from the cytoplasm to the periplasm. NqrA to NqrE are probably involved in the second step, the conversion of ubisemiquinone to ubiquinol.</text>
</comment>
<comment type="catalytic activity">
    <reaction evidence="1">
        <text>a ubiquinone + n Na(+)(in) + NADH + H(+) = a ubiquinol + n Na(+)(out) + NAD(+)</text>
        <dbReference type="Rhea" id="RHEA:47748"/>
        <dbReference type="Rhea" id="RHEA-COMP:9565"/>
        <dbReference type="Rhea" id="RHEA-COMP:9566"/>
        <dbReference type="ChEBI" id="CHEBI:15378"/>
        <dbReference type="ChEBI" id="CHEBI:16389"/>
        <dbReference type="ChEBI" id="CHEBI:17976"/>
        <dbReference type="ChEBI" id="CHEBI:29101"/>
        <dbReference type="ChEBI" id="CHEBI:57540"/>
        <dbReference type="ChEBI" id="CHEBI:57945"/>
        <dbReference type="EC" id="7.2.1.1"/>
    </reaction>
</comment>
<comment type="subunit">
    <text evidence="1">Composed of six subunits; NqrA, NqrB, NqrC, NqrD, NqrE and NqrF.</text>
</comment>
<comment type="similarity">
    <text evidence="1">Belongs to the NqrA family.</text>
</comment>
<evidence type="ECO:0000255" key="1">
    <source>
        <dbReference type="HAMAP-Rule" id="MF_00425"/>
    </source>
</evidence>
<name>NQRA_YERP3</name>
<organism>
    <name type="scientific">Yersinia pseudotuberculosis serotype O:1b (strain IP 31758)</name>
    <dbReference type="NCBI Taxonomy" id="349747"/>
    <lineage>
        <taxon>Bacteria</taxon>
        <taxon>Pseudomonadati</taxon>
        <taxon>Pseudomonadota</taxon>
        <taxon>Gammaproteobacteria</taxon>
        <taxon>Enterobacterales</taxon>
        <taxon>Yersiniaceae</taxon>
        <taxon>Yersinia</taxon>
    </lineage>
</organism>
<proteinExistence type="inferred from homology"/>
<sequence length="447" mass="48944">MIKIKKGLDLPIAGAPVQTIQDGPAIHHVALLGEEYVGMRPSMLVQEGDQVKKGQALFEDKKNPGVLFTAPASGKISAINRGERRVLQSVVIEVEGDEQIPFEHYAAEELNQLSDEQVQHHLLTSGLWTALRTRPFSKTPVPGSRPRAIFISAMDTQPLAADPQVIIATESEAFNHGLTVLTRLTDGKVHVCHAAGQAVTRHTNTQVTYNEFSGPHPAGLVGTHIHFLEPVSQTKMVWHVGYQDVIAIGKLFTRGELCTDRIVALAGPQVNQPILLRTRLGASLSGLTAGKLKEGDNRIISGSVLSGTAFSATHGYLGRFHQQVSVIREGREKELFGWVMPGRDKYSITRTTLGHFFKRKLFAFSTDMHGGERAMVPIGNYERVMPLDILATHLLRDLLAGDTDSAQALGCLELDEEDLALCTFVCPGKYEYGPVLRDILTQIEQEG</sequence>